<organism>
    <name type="scientific">Cyprinus carpio</name>
    <name type="common">Common carp</name>
    <dbReference type="NCBI Taxonomy" id="7962"/>
    <lineage>
        <taxon>Eukaryota</taxon>
        <taxon>Metazoa</taxon>
        <taxon>Chordata</taxon>
        <taxon>Craniata</taxon>
        <taxon>Vertebrata</taxon>
        <taxon>Euteleostomi</taxon>
        <taxon>Actinopterygii</taxon>
        <taxon>Neopterygii</taxon>
        <taxon>Teleostei</taxon>
        <taxon>Ostariophysi</taxon>
        <taxon>Cypriniformes</taxon>
        <taxon>Cyprinidae</taxon>
        <taxon>Cyprininae</taxon>
        <taxon>Cyprinus</taxon>
    </lineage>
</organism>
<comment type="function">
    <text>Vimentins are class-III intermediate filaments found in various non-epithelial cells, especially mesenchymal cells. Vimentin is attached to the nucleus, endoplasmic reticulum, and mitochondria, either laterally or terminally.</text>
</comment>
<comment type="subunit">
    <text evidence="1">Homomer assembled from elementary dimers.</text>
</comment>
<comment type="subcellular location">
    <subcellularLocation>
        <location evidence="2">Cytoplasm</location>
    </subcellularLocation>
    <subcellularLocation>
        <location evidence="2">Cytoplasm</location>
        <location evidence="2">Cytoskeleton</location>
    </subcellularLocation>
    <subcellularLocation>
        <location evidence="3">Nucleus matrix</location>
    </subcellularLocation>
</comment>
<comment type="domain">
    <text evidence="1">The central alpha-helical coiled-coil IF rod domain mediates elementary homodimerization.</text>
</comment>
<comment type="PTM">
    <text evidence="2">One of the most prominent phosphoproteins in various cells of mesenchymal origin. Phosphorylation is enhanced during cell division, at which time vimentin filaments are significantly reorganized.</text>
</comment>
<comment type="similarity">
    <text evidence="4">Belongs to the intermediate filament family.</text>
</comment>
<proteinExistence type="evidence at transcript level"/>
<keyword id="KW-0175">Coiled coil</keyword>
<keyword id="KW-0963">Cytoplasm</keyword>
<keyword id="KW-0206">Cytoskeleton</keyword>
<keyword id="KW-0403">Intermediate filament</keyword>
<keyword id="KW-0539">Nucleus</keyword>
<keyword id="KW-1185">Reference proteome</keyword>
<name>VIME_CYPCA</name>
<protein>
    <recommendedName>
        <fullName>Vimentin</fullName>
    </recommendedName>
</protein>
<dbReference type="EMBL" id="S76850">
    <property type="protein sequence ID" value="AAB20706.2"/>
    <property type="molecule type" value="mRNA"/>
</dbReference>
<dbReference type="PIR" id="A43950">
    <property type="entry name" value="A43950"/>
</dbReference>
<dbReference type="SMR" id="Q92155"/>
<dbReference type="Proteomes" id="UP000694384">
    <property type="component" value="Unplaced"/>
</dbReference>
<dbReference type="Proteomes" id="UP000694427">
    <property type="component" value="Unplaced"/>
</dbReference>
<dbReference type="Proteomes" id="UP000694700">
    <property type="component" value="Unplaced"/>
</dbReference>
<dbReference type="Proteomes" id="UP000694701">
    <property type="component" value="Unplaced"/>
</dbReference>
<dbReference type="Proteomes" id="UP001155660">
    <property type="component" value="Unplaced"/>
</dbReference>
<dbReference type="GO" id="GO:0030424">
    <property type="term" value="C:axon"/>
    <property type="evidence" value="ECO:0007669"/>
    <property type="project" value="TreeGrafter"/>
</dbReference>
<dbReference type="GO" id="GO:0005737">
    <property type="term" value="C:cytoplasm"/>
    <property type="evidence" value="ECO:0000250"/>
    <property type="project" value="UniProtKB"/>
</dbReference>
<dbReference type="GO" id="GO:0005882">
    <property type="term" value="C:intermediate filament"/>
    <property type="evidence" value="ECO:0000250"/>
    <property type="project" value="UniProtKB"/>
</dbReference>
<dbReference type="GO" id="GO:0016363">
    <property type="term" value="C:nuclear matrix"/>
    <property type="evidence" value="ECO:0007669"/>
    <property type="project" value="UniProtKB-SubCell"/>
</dbReference>
<dbReference type="GO" id="GO:0005886">
    <property type="term" value="C:plasma membrane"/>
    <property type="evidence" value="ECO:0007669"/>
    <property type="project" value="TreeGrafter"/>
</dbReference>
<dbReference type="GO" id="GO:0005200">
    <property type="term" value="F:structural constituent of cytoskeleton"/>
    <property type="evidence" value="ECO:0007669"/>
    <property type="project" value="TreeGrafter"/>
</dbReference>
<dbReference type="GO" id="GO:0045109">
    <property type="term" value="P:intermediate filament organization"/>
    <property type="evidence" value="ECO:0007669"/>
    <property type="project" value="TreeGrafter"/>
</dbReference>
<dbReference type="FunFam" id="1.20.5.1160:FF:000001">
    <property type="entry name" value="Keratin type II"/>
    <property type="match status" value="1"/>
</dbReference>
<dbReference type="FunFam" id="1.20.5.170:FF:000002">
    <property type="entry name" value="Type I keratin KA11"/>
    <property type="match status" value="1"/>
</dbReference>
<dbReference type="FunFam" id="1.20.5.500:FF:000001">
    <property type="entry name" value="Type II keratin 23"/>
    <property type="match status" value="1"/>
</dbReference>
<dbReference type="Gene3D" id="1.20.5.170">
    <property type="match status" value="1"/>
</dbReference>
<dbReference type="Gene3D" id="1.20.5.500">
    <property type="entry name" value="Single helix bin"/>
    <property type="match status" value="1"/>
</dbReference>
<dbReference type="Gene3D" id="1.20.5.1160">
    <property type="entry name" value="Vasodilator-stimulated phosphoprotein"/>
    <property type="match status" value="1"/>
</dbReference>
<dbReference type="InterPro" id="IPR018039">
    <property type="entry name" value="IF_conserved"/>
</dbReference>
<dbReference type="InterPro" id="IPR039008">
    <property type="entry name" value="IF_rod_dom"/>
</dbReference>
<dbReference type="InterPro" id="IPR006821">
    <property type="entry name" value="Intermed_filament_DNA-bd"/>
</dbReference>
<dbReference type="InterPro" id="IPR050405">
    <property type="entry name" value="Intermediate_filament"/>
</dbReference>
<dbReference type="PANTHER" id="PTHR45652">
    <property type="entry name" value="GLIAL FIBRILLARY ACIDIC PROTEIN"/>
    <property type="match status" value="1"/>
</dbReference>
<dbReference type="PANTHER" id="PTHR45652:SF5">
    <property type="entry name" value="VIMENTIN"/>
    <property type="match status" value="1"/>
</dbReference>
<dbReference type="Pfam" id="PF00038">
    <property type="entry name" value="Filament"/>
    <property type="match status" value="1"/>
</dbReference>
<dbReference type="Pfam" id="PF04732">
    <property type="entry name" value="Filament_head"/>
    <property type="match status" value="1"/>
</dbReference>
<dbReference type="SMART" id="SM01391">
    <property type="entry name" value="Filament"/>
    <property type="match status" value="1"/>
</dbReference>
<dbReference type="SUPFAM" id="SSF64593">
    <property type="entry name" value="Intermediate filament protein, coiled coil region"/>
    <property type="match status" value="2"/>
</dbReference>
<dbReference type="PROSITE" id="PS00226">
    <property type="entry name" value="IF_ROD_1"/>
    <property type="match status" value="1"/>
</dbReference>
<dbReference type="PROSITE" id="PS51842">
    <property type="entry name" value="IF_ROD_2"/>
    <property type="match status" value="1"/>
</dbReference>
<gene>
    <name type="primary">vim</name>
</gene>
<accession>Q92155</accession>
<feature type="chain" id="PRO_0000063767" description="Vimentin">
    <location>
        <begin position="1"/>
        <end position="455"/>
    </location>
</feature>
<feature type="domain" description="IF rod" evidence="4">
    <location>
        <begin position="94"/>
        <end position="402"/>
    </location>
</feature>
<feature type="region of interest" description="Head">
    <location>
        <begin position="1"/>
        <end position="87"/>
    </location>
</feature>
<feature type="region of interest" description="Coil 1A">
    <location>
        <begin position="88"/>
        <end position="122"/>
    </location>
</feature>
<feature type="region of interest" description="Linker 1">
    <location>
        <begin position="123"/>
        <end position="144"/>
    </location>
</feature>
<feature type="region of interest" description="Coil 1B">
    <location>
        <begin position="145"/>
        <end position="236"/>
    </location>
</feature>
<feature type="region of interest" description="Linker 12">
    <location>
        <begin position="237"/>
        <end position="259"/>
    </location>
</feature>
<feature type="region of interest" description="Coil 2">
    <location>
        <begin position="260"/>
        <end position="398"/>
    </location>
</feature>
<feature type="region of interest" description="Tail">
    <location>
        <begin position="399"/>
        <end position="455"/>
    </location>
</feature>
<feature type="coiled-coil region">
    <location>
        <begin position="87"/>
        <end position="122"/>
    </location>
</feature>
<feature type="coiled-coil region">
    <location>
        <begin position="145"/>
        <end position="236"/>
    </location>
</feature>
<feature type="coiled-coil region">
    <location>
        <begin position="294"/>
        <end position="398"/>
    </location>
</feature>
<feature type="site" description="Stutter" evidence="1">
    <location>
        <position position="342"/>
    </location>
</feature>
<sequence length="455" mass="52492">MASRTNTSSYKRMFGGERPAMVRSTYSSRQYSSPVRTTSRVSYSSASSASPSIYMSKGARVRSSGPLPRLATETLDFGLADAINTEFKTNRTNEKAEMQHLNDRFASYIDKVRFLEQQNKILIAELEQMRGKGSSRVGDLYQDEMRELRRQVDQLTNEKATVEVDRDNLGEDIERLKEKLQEEMLQREDAENTLRGFRQDVDNASLARLHLETKVESLQEEIAFLKKLHDEELAELQIQIQEQHVQIDMEVAKPDLTAALKDVRQQYETLASRNLQESEEWYKSKFADLSEAAARNNEAIRLAKQEANDYRRQLQSLTCDLEALKGTNESLERQLREMEDNFSMEASGYQDTIARLEDDIRNMKDEMARHLREYQDLLNVKMALDIEIATYRKLLEGEESRITTPFPNLSSLTLRETMKETRPAMDSLSKKVVIKTIETRDGHIINESSQNDDLE</sequence>
<evidence type="ECO:0000250" key="1"/>
<evidence type="ECO:0000250" key="2">
    <source>
        <dbReference type="UniProtKB" id="P08670"/>
    </source>
</evidence>
<evidence type="ECO:0000250" key="3">
    <source>
        <dbReference type="UniProtKB" id="P31000"/>
    </source>
</evidence>
<evidence type="ECO:0000255" key="4">
    <source>
        <dbReference type="PROSITE-ProRule" id="PRU01188"/>
    </source>
</evidence>
<reference key="1">
    <citation type="journal article" date="1991" name="Brain Res. Mol. Brain Res.">
        <title>Isolation and sequence analysis of two intermediate filament cDNA clones from fish optic nerve.</title>
        <authorList>
            <person name="Cohen I."/>
            <person name="Shani Y."/>
            <person name="Blaugrund E."/>
            <person name="Schwartz M."/>
        </authorList>
    </citation>
    <scope>NUCLEOTIDE SEQUENCE [MRNA]</scope>
    <source>
        <tissue>Optic nerve</tissue>
    </source>
</reference>